<feature type="chain" id="PRO_0000375276" description="YcgL domain-containing protein AHA_2135">
    <location>
        <begin position="1"/>
        <end position="93"/>
    </location>
</feature>
<feature type="domain" description="YcgL" evidence="1">
    <location>
        <begin position="1"/>
        <end position="85"/>
    </location>
</feature>
<evidence type="ECO:0000255" key="1">
    <source>
        <dbReference type="HAMAP-Rule" id="MF_01866"/>
    </source>
</evidence>
<protein>
    <recommendedName>
        <fullName evidence="1">YcgL domain-containing protein AHA_2135</fullName>
    </recommendedName>
</protein>
<accession>A0KK58</accession>
<organism>
    <name type="scientific">Aeromonas hydrophila subsp. hydrophila (strain ATCC 7966 / DSM 30187 / BCRC 13018 / CCUG 14551 / JCM 1027 / KCTC 2358 / NCIMB 9240 / NCTC 8049)</name>
    <dbReference type="NCBI Taxonomy" id="380703"/>
    <lineage>
        <taxon>Bacteria</taxon>
        <taxon>Pseudomonadati</taxon>
        <taxon>Pseudomonadota</taxon>
        <taxon>Gammaproteobacteria</taxon>
        <taxon>Aeromonadales</taxon>
        <taxon>Aeromonadaceae</taxon>
        <taxon>Aeromonas</taxon>
    </lineage>
</organism>
<name>Y2135_AERHH</name>
<proteinExistence type="inferred from homology"/>
<gene>
    <name type="ordered locus">AHA_2135</name>
</gene>
<dbReference type="EMBL" id="CP000462">
    <property type="protein sequence ID" value="ABK38075.1"/>
    <property type="molecule type" value="Genomic_DNA"/>
</dbReference>
<dbReference type="RefSeq" id="WP_011705994.1">
    <property type="nucleotide sequence ID" value="NC_008570.1"/>
</dbReference>
<dbReference type="RefSeq" id="YP_856659.1">
    <property type="nucleotide sequence ID" value="NC_008570.1"/>
</dbReference>
<dbReference type="SMR" id="A0KK58"/>
<dbReference type="STRING" id="380703.AHA_2135"/>
<dbReference type="EnsemblBacteria" id="ABK38075">
    <property type="protein sequence ID" value="ABK38075"/>
    <property type="gene ID" value="AHA_2135"/>
</dbReference>
<dbReference type="GeneID" id="4488425"/>
<dbReference type="KEGG" id="aha:AHA_2135"/>
<dbReference type="PATRIC" id="fig|380703.7.peg.2136"/>
<dbReference type="eggNOG" id="COG3100">
    <property type="taxonomic scope" value="Bacteria"/>
</dbReference>
<dbReference type="HOGENOM" id="CLU_155118_1_0_6"/>
<dbReference type="OrthoDB" id="7062382at2"/>
<dbReference type="Proteomes" id="UP000000756">
    <property type="component" value="Chromosome"/>
</dbReference>
<dbReference type="Gene3D" id="3.10.510.20">
    <property type="entry name" value="YcgL domain"/>
    <property type="match status" value="1"/>
</dbReference>
<dbReference type="HAMAP" id="MF_01866">
    <property type="entry name" value="UPF0745"/>
    <property type="match status" value="1"/>
</dbReference>
<dbReference type="InterPro" id="IPR038068">
    <property type="entry name" value="YcgL-like_sf"/>
</dbReference>
<dbReference type="InterPro" id="IPR027354">
    <property type="entry name" value="YcgL_dom"/>
</dbReference>
<dbReference type="PANTHER" id="PTHR38109">
    <property type="entry name" value="PROTEIN YCGL"/>
    <property type="match status" value="1"/>
</dbReference>
<dbReference type="PANTHER" id="PTHR38109:SF1">
    <property type="entry name" value="PROTEIN YCGL"/>
    <property type="match status" value="1"/>
</dbReference>
<dbReference type="Pfam" id="PF05166">
    <property type="entry name" value="YcgL"/>
    <property type="match status" value="1"/>
</dbReference>
<dbReference type="SUPFAM" id="SSF160191">
    <property type="entry name" value="YcgL-like"/>
    <property type="match status" value="1"/>
</dbReference>
<dbReference type="PROSITE" id="PS51648">
    <property type="entry name" value="YCGL"/>
    <property type="match status" value="1"/>
</dbReference>
<keyword id="KW-1185">Reference proteome</keyword>
<sequence>MLCAVYKSRKKAETYLFVERREDFSRVPEVLMSAFGRPELVLMTKLDPAKPLGIASTSRVMEALQSQGFYLQVPPPPENLLEQHKAQLKAERE</sequence>
<reference key="1">
    <citation type="journal article" date="2006" name="J. Bacteriol.">
        <title>Genome sequence of Aeromonas hydrophila ATCC 7966T: jack of all trades.</title>
        <authorList>
            <person name="Seshadri R."/>
            <person name="Joseph S.W."/>
            <person name="Chopra A.K."/>
            <person name="Sha J."/>
            <person name="Shaw J."/>
            <person name="Graf J."/>
            <person name="Haft D.H."/>
            <person name="Wu M."/>
            <person name="Ren Q."/>
            <person name="Rosovitz M.J."/>
            <person name="Madupu R."/>
            <person name="Tallon L."/>
            <person name="Kim M."/>
            <person name="Jin S."/>
            <person name="Vuong H."/>
            <person name="Stine O.C."/>
            <person name="Ali A."/>
            <person name="Horneman A.J."/>
            <person name="Heidelberg J.F."/>
        </authorList>
    </citation>
    <scope>NUCLEOTIDE SEQUENCE [LARGE SCALE GENOMIC DNA]</scope>
    <source>
        <strain>ATCC 7966 / DSM 30187 / BCRC 13018 / CCUG 14551 / JCM 1027 / KCTC 2358 / NCIMB 9240 / NCTC 8049</strain>
    </source>
</reference>